<keyword id="KW-0071">Autoinducer synthesis</keyword>
<keyword id="KW-0408">Iron</keyword>
<keyword id="KW-0456">Lyase</keyword>
<keyword id="KW-0479">Metal-binding</keyword>
<keyword id="KW-0673">Quorum sensing</keyword>
<dbReference type="EC" id="4.4.1.21" evidence="1"/>
<dbReference type="EMBL" id="AY391122">
    <property type="protein sequence ID" value="AAQ91383.1"/>
    <property type="molecule type" value="Genomic_DNA"/>
</dbReference>
<dbReference type="RefSeq" id="WP_017820391.1">
    <property type="nucleotide sequence ID" value="NZ_WAHT01000008.1"/>
</dbReference>
<dbReference type="SMR" id="Q6TP45"/>
<dbReference type="STRING" id="663.BAU10_12230"/>
<dbReference type="eggNOG" id="COG1854">
    <property type="taxonomic scope" value="Bacteria"/>
</dbReference>
<dbReference type="GO" id="GO:0005506">
    <property type="term" value="F:iron ion binding"/>
    <property type="evidence" value="ECO:0007669"/>
    <property type="project" value="InterPro"/>
</dbReference>
<dbReference type="GO" id="GO:0043768">
    <property type="term" value="F:S-ribosylhomocysteine lyase activity"/>
    <property type="evidence" value="ECO:0007669"/>
    <property type="project" value="UniProtKB-UniRule"/>
</dbReference>
<dbReference type="GO" id="GO:0009372">
    <property type="term" value="P:quorum sensing"/>
    <property type="evidence" value="ECO:0007669"/>
    <property type="project" value="UniProtKB-UniRule"/>
</dbReference>
<dbReference type="FunFam" id="3.30.1360.80:FF:000001">
    <property type="entry name" value="S-ribosylhomocysteine lyase"/>
    <property type="match status" value="1"/>
</dbReference>
<dbReference type="Gene3D" id="3.30.1360.80">
    <property type="entry name" value="S-ribosylhomocysteinase (LuxS)"/>
    <property type="match status" value="1"/>
</dbReference>
<dbReference type="HAMAP" id="MF_00091">
    <property type="entry name" value="LuxS"/>
    <property type="match status" value="1"/>
</dbReference>
<dbReference type="InterPro" id="IPR037005">
    <property type="entry name" value="LuxS_sf"/>
</dbReference>
<dbReference type="InterPro" id="IPR011249">
    <property type="entry name" value="Metalloenz_LuxS/M16"/>
</dbReference>
<dbReference type="InterPro" id="IPR003815">
    <property type="entry name" value="S-ribosylhomocysteinase"/>
</dbReference>
<dbReference type="NCBIfam" id="NF002602">
    <property type="entry name" value="PRK02260.1-2"/>
    <property type="match status" value="1"/>
</dbReference>
<dbReference type="PANTHER" id="PTHR35799">
    <property type="entry name" value="S-RIBOSYLHOMOCYSTEINE LYASE"/>
    <property type="match status" value="1"/>
</dbReference>
<dbReference type="PANTHER" id="PTHR35799:SF1">
    <property type="entry name" value="S-RIBOSYLHOMOCYSTEINE LYASE"/>
    <property type="match status" value="1"/>
</dbReference>
<dbReference type="Pfam" id="PF02664">
    <property type="entry name" value="LuxS"/>
    <property type="match status" value="1"/>
</dbReference>
<dbReference type="PIRSF" id="PIRSF006160">
    <property type="entry name" value="AI2"/>
    <property type="match status" value="1"/>
</dbReference>
<dbReference type="PRINTS" id="PR01487">
    <property type="entry name" value="LUXSPROTEIN"/>
</dbReference>
<dbReference type="SUPFAM" id="SSF63411">
    <property type="entry name" value="LuxS/MPP-like metallohydrolase"/>
    <property type="match status" value="1"/>
</dbReference>
<evidence type="ECO:0000255" key="1">
    <source>
        <dbReference type="HAMAP-Rule" id="MF_00091"/>
    </source>
</evidence>
<organism>
    <name type="scientific">Vibrio alginolyticus</name>
    <dbReference type="NCBI Taxonomy" id="663"/>
    <lineage>
        <taxon>Bacteria</taxon>
        <taxon>Pseudomonadati</taxon>
        <taxon>Pseudomonadota</taxon>
        <taxon>Gammaproteobacteria</taxon>
        <taxon>Vibrionales</taxon>
        <taxon>Vibrionaceae</taxon>
        <taxon>Vibrio</taxon>
    </lineage>
</organism>
<gene>
    <name evidence="1" type="primary">luxS</name>
</gene>
<reference key="1">
    <citation type="submission" date="2003-09" db="EMBL/GenBank/DDBJ databases">
        <title>Vibrio alginolyticus putative luxS gene.</title>
        <authorList>
            <person name="Chang C."/>
        </authorList>
    </citation>
    <scope>NUCLEOTIDE SEQUENCE [GENOMIC DNA]</scope>
</reference>
<accession>Q6TP45</accession>
<protein>
    <recommendedName>
        <fullName evidence="1">S-ribosylhomocysteine lyase</fullName>
        <ecNumber evidence="1">4.4.1.21</ecNumber>
    </recommendedName>
    <alternativeName>
        <fullName evidence="1">AI-2 synthesis protein</fullName>
    </alternativeName>
    <alternativeName>
        <fullName evidence="1">Autoinducer-2 production protein LuxS</fullName>
    </alternativeName>
</protein>
<feature type="chain" id="PRO_0000172273" description="S-ribosylhomocysteine lyase">
    <location>
        <begin position="1"/>
        <end position="172"/>
    </location>
</feature>
<feature type="binding site" evidence="1">
    <location>
        <position position="54"/>
    </location>
    <ligand>
        <name>Fe cation</name>
        <dbReference type="ChEBI" id="CHEBI:24875"/>
    </ligand>
</feature>
<feature type="binding site" evidence="1">
    <location>
        <position position="58"/>
    </location>
    <ligand>
        <name>Fe cation</name>
        <dbReference type="ChEBI" id="CHEBI:24875"/>
    </ligand>
</feature>
<feature type="binding site" evidence="1">
    <location>
        <position position="128"/>
    </location>
    <ligand>
        <name>Fe cation</name>
        <dbReference type="ChEBI" id="CHEBI:24875"/>
    </ligand>
</feature>
<proteinExistence type="inferred from homology"/>
<name>LUXS_VIBAL</name>
<comment type="function">
    <text evidence="1">Involved in the synthesis of autoinducer 2 (AI-2) which is secreted by bacteria and is used to communicate both the cell density and the metabolic potential of the environment. The regulation of gene expression in response to changes in cell density is called quorum sensing. Catalyzes the transformation of S-ribosylhomocysteine (RHC) to homocysteine (HC) and 4,5-dihydroxy-2,3-pentadione (DPD).</text>
</comment>
<comment type="catalytic activity">
    <reaction evidence="1">
        <text>S-(5-deoxy-D-ribos-5-yl)-L-homocysteine = (S)-4,5-dihydroxypentane-2,3-dione + L-homocysteine</text>
        <dbReference type="Rhea" id="RHEA:17753"/>
        <dbReference type="ChEBI" id="CHEBI:29484"/>
        <dbReference type="ChEBI" id="CHEBI:58195"/>
        <dbReference type="ChEBI" id="CHEBI:58199"/>
        <dbReference type="EC" id="4.4.1.21"/>
    </reaction>
</comment>
<comment type="cofactor">
    <cofactor evidence="1">
        <name>Fe cation</name>
        <dbReference type="ChEBI" id="CHEBI:24875"/>
    </cofactor>
    <text evidence="1">Binds 1 Fe cation per subunit.</text>
</comment>
<comment type="subunit">
    <text evidence="1">Homodimer.</text>
</comment>
<comment type="similarity">
    <text evidence="1">Belongs to the LuxS family.</text>
</comment>
<sequence length="172" mass="19075">MPLLDSFTVDHTRMNAPAVRVAKTMQTPKGDTITVFDLRFTAPNKDILSEKGIHTLEHLYAGFMRNHLNGDSVEIIDISPMGCRTGFYMSLIGTPSEQQVADAWIAAMEDVLKVESQNKIPELNEYQCGTAAMHSLKEAQQIAKNILDAGVSVNKNDELALPESMLKELRID</sequence>